<organism>
    <name type="scientific">Human herpesvirus 2 (strain HG52)</name>
    <name type="common">HHV-2</name>
    <name type="synonym">Human herpes simplex virus 2</name>
    <dbReference type="NCBI Taxonomy" id="10315"/>
    <lineage>
        <taxon>Viruses</taxon>
        <taxon>Duplodnaviria</taxon>
        <taxon>Heunggongvirae</taxon>
        <taxon>Peploviricota</taxon>
        <taxon>Herviviricetes</taxon>
        <taxon>Herpesvirales</taxon>
        <taxon>Orthoherpesviridae</taxon>
        <taxon>Alphaherpesvirinae</taxon>
        <taxon>Simplexvirus</taxon>
        <taxon>Simplexvirus humanalpha2</taxon>
        <taxon>Human herpesvirus 2</taxon>
    </lineage>
</organism>
<name>UL56_HHV2H</name>
<protein>
    <recommendedName>
        <fullName>Protein UL56</fullName>
    </recommendedName>
</protein>
<dbReference type="EMBL" id="D10471">
    <property type="protein sequence ID" value="BAA01271.1"/>
    <property type="molecule type" value="Genomic_DNA"/>
</dbReference>
<dbReference type="EMBL" id="Z86099">
    <property type="protein sequence ID" value="CAB06704.1"/>
    <property type="molecule type" value="Genomic_DNA"/>
</dbReference>
<dbReference type="PIR" id="JQ1500">
    <property type="entry name" value="WMBEXC"/>
</dbReference>
<dbReference type="RefSeq" id="YP_009137209.1">
    <property type="nucleotide sequence ID" value="NC_001798.2"/>
</dbReference>
<dbReference type="SMR" id="P28282"/>
<dbReference type="BioGRID" id="1677950">
    <property type="interactions" value="2"/>
</dbReference>
<dbReference type="ELM" id="P28282"/>
<dbReference type="IntAct" id="P28282">
    <property type="interactions" value="1"/>
</dbReference>
<dbReference type="DNASU" id="1487345"/>
<dbReference type="GeneID" id="1487345"/>
<dbReference type="KEGG" id="vg:1487345"/>
<dbReference type="Proteomes" id="UP000001874">
    <property type="component" value="Segment"/>
</dbReference>
<dbReference type="GO" id="GO:0044178">
    <property type="term" value="C:host cell Golgi membrane"/>
    <property type="evidence" value="ECO:0007669"/>
    <property type="project" value="UniProtKB-SubCell"/>
</dbReference>
<dbReference type="GO" id="GO:0016020">
    <property type="term" value="C:membrane"/>
    <property type="evidence" value="ECO:0007669"/>
    <property type="project" value="UniProtKB-KW"/>
</dbReference>
<dbReference type="InterPro" id="IPR007620">
    <property type="entry name" value="Herpes_UL56"/>
</dbReference>
<dbReference type="Pfam" id="PF04534">
    <property type="entry name" value="Herpes_UL56"/>
    <property type="match status" value="1"/>
</dbReference>
<sequence length="235" mass="24715">MALGAGHAHACRDDGDDSVIDAPPPYESVAGASAGQFVVIDIDTPTDSPPPYSAGTSPVGLVSPASSGDGEVCERGRSRRAAWRAARRARRRAERRARRRSFGPGGLFVETPLFLPETMIGAHPGVGGDLPSGLPTYAEATSDRPPTYAMVMAACPTEPPGGSVGPADQPRVQSSRTWRPPLVNSRELYRAQRAARCASSSDTPQAPGWCGGTCRHAVFGVVAVVVVIILAFLWR</sequence>
<comment type="function">
    <text evidence="5 6 7">Plays a role in the transport and release of virions form the host cytoplasm to the extracellular space. Relocalizes host NEDD4, a cytosolic E3 ligase, to cytoplasmic vesicles.</text>
</comment>
<comment type="subunit">
    <text evidence="4 5 7">Interacts with host ITCH; this interaction induces ubiquitination and degradation of ITCH (PubMed:20682038). Interacts with host NEDD4; this interaction increases NEDD4 ubiquitination (PubMed:18353951). Interacts with UL11 (PubMed:16604447).</text>
</comment>
<comment type="interaction">
    <interactant intactId="EBI-38291610">
        <id>P28282</id>
    </interactant>
    <interactant intactId="EBI-726944">
        <id>P46934</id>
        <label>NEDD4</label>
    </interactant>
    <organismsDiffer>true</organismsDiffer>
    <experiments>8</experiments>
</comment>
<comment type="subcellular location">
    <subcellularLocation>
        <location evidence="4">Host Golgi apparatus membrane</location>
        <topology evidence="2">Single-pass membrane protein</topology>
    </subcellularLocation>
    <subcellularLocation>
        <location evidence="6 7">Host cytoplasm</location>
    </subcellularLocation>
    <text evidence="6">If expressed alone, is predominantly present in host trans-Golgi network (TGN) and partially in Golgi complex and early endosomes.</text>
</comment>
<comment type="domain">
    <text evidence="1">Late-budding domains (L domains) are short sequence motifs essential for viral particle budding. They recruit proteins of the host ESCRT machinery (Endosomal Sorting Complex Required for Transport) or ESCRT-associated proteins. UL56 contains three L domains: the PPXY motifs which are involved in the interaction with ITCH, a member of the NEDD4 family.</text>
</comment>
<comment type="similarity">
    <text evidence="8">Belongs to the herpesviridae UL56 family.</text>
</comment>
<organismHost>
    <name type="scientific">Homo sapiens</name>
    <name type="common">Human</name>
    <dbReference type="NCBI Taxonomy" id="9606"/>
</organismHost>
<proteinExistence type="evidence at protein level"/>
<keyword id="KW-1035">Host cytoplasm</keyword>
<keyword id="KW-1040">Host Golgi apparatus</keyword>
<keyword id="KW-1043">Host membrane</keyword>
<keyword id="KW-0472">Membrane</keyword>
<keyword id="KW-1185">Reference proteome</keyword>
<keyword id="KW-0812">Transmembrane</keyword>
<keyword id="KW-1133">Transmembrane helix</keyword>
<feature type="chain" id="PRO_0000116125" description="Protein UL56">
    <location>
        <begin position="1"/>
        <end position="235"/>
    </location>
</feature>
<feature type="transmembrane region" description="Helical" evidence="2">
    <location>
        <begin position="214"/>
        <end position="234"/>
    </location>
</feature>
<feature type="region of interest" description="Disordered" evidence="3">
    <location>
        <begin position="1"/>
        <end position="27"/>
    </location>
</feature>
<feature type="region of interest" description="Disordered" evidence="3">
    <location>
        <begin position="45"/>
        <end position="74"/>
    </location>
</feature>
<feature type="short sequence motif" description="PPXY motif" evidence="1">
    <location>
        <begin position="23"/>
        <end position="26"/>
    </location>
</feature>
<feature type="short sequence motif" description="PPXY motif" evidence="1">
    <location>
        <begin position="49"/>
        <end position="52"/>
    </location>
</feature>
<feature type="short sequence motif" description="PPXY motif" evidence="1">
    <location>
        <begin position="144"/>
        <end position="147"/>
    </location>
</feature>
<gene>
    <name type="primary">UL56</name>
</gene>
<evidence type="ECO:0000250" key="1">
    <source>
        <dbReference type="UniProtKB" id="P10240"/>
    </source>
</evidence>
<evidence type="ECO:0000255" key="2"/>
<evidence type="ECO:0000256" key="3">
    <source>
        <dbReference type="SAM" id="MobiDB-lite"/>
    </source>
</evidence>
<evidence type="ECO:0000269" key="4">
    <source>
    </source>
</evidence>
<evidence type="ECO:0000269" key="5">
    <source>
    </source>
</evidence>
<evidence type="ECO:0000269" key="6">
    <source>
    </source>
</evidence>
<evidence type="ECO:0000269" key="7">
    <source>
    </source>
</evidence>
<evidence type="ECO:0000305" key="8"/>
<reference key="1">
    <citation type="journal article" date="1991" name="J. Gen. Virol.">
        <title>Comparative sequence analysis of the long repeat regions and adjoining parts of the long unique regions in the genomes of herpes simplex viruses types 1 and 2.</title>
        <authorList>
            <person name="McGeoch D.J."/>
            <person name="Cunningham C."/>
            <person name="McIntyre G."/>
            <person name="Dolan A."/>
        </authorList>
    </citation>
    <scope>NUCLEOTIDE SEQUENCE [GENOMIC DNA]</scope>
</reference>
<reference key="2">
    <citation type="journal article" date="1998" name="J. Virol.">
        <title>The genome sequence of herpes simplex virus type 2.</title>
        <authorList>
            <person name="Dolan A."/>
            <person name="Jamieson F.E."/>
            <person name="Cunningham C."/>
            <person name="Barnett B.C."/>
            <person name="McGeoch D.J."/>
        </authorList>
    </citation>
    <scope>NUCLEOTIDE SEQUENCE [LARGE SCALE GENOMIC DNA]</scope>
</reference>
<reference key="3">
    <citation type="journal article" date="2006" name="Virus Genes">
        <title>Association of two membrane proteins encoded by herpes simplex virus type 2, UL11 and UL56.</title>
        <authorList>
            <person name="Koshizuka T."/>
            <person name="Kawaguchi Y."/>
            <person name="Goshima F."/>
            <person name="Mori I."/>
            <person name="Nishiyama Y."/>
        </authorList>
    </citation>
    <scope>SUBCELLULAR LOCATION</scope>
    <scope>INTERACTION WITH UL11</scope>
</reference>
<reference key="4">
    <citation type="journal article" date="2008" name="J. Virol.">
        <title>Herpes simplex virus type 2 UL56 interacts with the ubiquitin ligase Nedd4 and increases its ubiquitination.</title>
        <authorList>
            <person name="Ushijima Y."/>
            <person name="Koshizuka T."/>
            <person name="Goshima F."/>
            <person name="Kimura H."/>
            <person name="Nishiyama Y."/>
        </authorList>
    </citation>
    <scope>FUNCTION</scope>
    <scope>INTERACTION WITH HOST NEDD4</scope>
</reference>
<reference key="5">
    <citation type="journal article" date="2009" name="Virol. J.">
        <title>Herpes simplex virus type 2 tegument protein UL56 relocalizes ubiquitin ligase Nedd4 and has a role in transport and/or release of virions.</title>
        <authorList>
            <person name="Ushijima Y."/>
            <person name="Goshima F."/>
            <person name="Kimura H."/>
            <person name="Nishiyama Y."/>
        </authorList>
    </citation>
    <scope>FUNCTION</scope>
    <scope>SUBCELLULAR LOCATION</scope>
</reference>
<reference key="6">
    <citation type="journal article" date="2010" name="Virol. J.">
        <title>Herpes simplex virus UL56 interacts with and regulates the Nedd4-family ubiquitin ligase Itch.</title>
        <authorList>
            <person name="Ushijima Y."/>
            <person name="Luo C."/>
            <person name="Kamakura M."/>
            <person name="Goshima F."/>
            <person name="Kimura H."/>
            <person name="Nishiyama Y."/>
        </authorList>
    </citation>
    <scope>FUNCTION</scope>
    <scope>INTERACTION WITH HOST ITCH</scope>
</reference>
<accession>P28282</accession>